<organism>
    <name type="scientific">Pyrobaculum neutrophilum (strain DSM 2338 / JCM 9278 / NBRC 100436 / V24Sta)</name>
    <name type="common">Thermoproteus neutrophilus</name>
    <dbReference type="NCBI Taxonomy" id="444157"/>
    <lineage>
        <taxon>Archaea</taxon>
        <taxon>Thermoproteota</taxon>
        <taxon>Thermoprotei</taxon>
        <taxon>Thermoproteales</taxon>
        <taxon>Thermoproteaceae</taxon>
        <taxon>Pyrobaculum</taxon>
    </lineage>
</organism>
<comment type="similarity">
    <text evidence="1">Belongs to the eukaryotic ribosomal protein eL40 family.</text>
</comment>
<feature type="chain" id="PRO_1000133753" description="Large ribosomal subunit protein eL40">
    <location>
        <begin position="1"/>
        <end position="53"/>
    </location>
</feature>
<proteinExistence type="inferred from homology"/>
<name>RL40_PYRNV</name>
<dbReference type="EMBL" id="CP001014">
    <property type="protein sequence ID" value="ACB40563.1"/>
    <property type="molecule type" value="Genomic_DNA"/>
</dbReference>
<dbReference type="RefSeq" id="WP_012350982.1">
    <property type="nucleotide sequence ID" value="NC_010525.1"/>
</dbReference>
<dbReference type="SMR" id="B1YA13"/>
<dbReference type="STRING" id="444157.Tneu_1641"/>
<dbReference type="GeneID" id="6165643"/>
<dbReference type="KEGG" id="tne:Tneu_1641"/>
<dbReference type="eggNOG" id="arCOG04049">
    <property type="taxonomic scope" value="Archaea"/>
</dbReference>
<dbReference type="HOGENOM" id="CLU_175093_1_0_2"/>
<dbReference type="OrthoDB" id="45138at2157"/>
<dbReference type="Proteomes" id="UP000001694">
    <property type="component" value="Chromosome"/>
</dbReference>
<dbReference type="GO" id="GO:1990904">
    <property type="term" value="C:ribonucleoprotein complex"/>
    <property type="evidence" value="ECO:0007669"/>
    <property type="project" value="UniProtKB-KW"/>
</dbReference>
<dbReference type="GO" id="GO:0005840">
    <property type="term" value="C:ribosome"/>
    <property type="evidence" value="ECO:0007669"/>
    <property type="project" value="UniProtKB-KW"/>
</dbReference>
<dbReference type="GO" id="GO:0003735">
    <property type="term" value="F:structural constituent of ribosome"/>
    <property type="evidence" value="ECO:0007669"/>
    <property type="project" value="InterPro"/>
</dbReference>
<dbReference type="GO" id="GO:0006412">
    <property type="term" value="P:translation"/>
    <property type="evidence" value="ECO:0007669"/>
    <property type="project" value="UniProtKB-UniRule"/>
</dbReference>
<dbReference type="Gene3D" id="4.10.1060.50">
    <property type="match status" value="1"/>
</dbReference>
<dbReference type="HAMAP" id="MF_00788">
    <property type="entry name" value="Ribosomal_eL40"/>
    <property type="match status" value="1"/>
</dbReference>
<dbReference type="InterPro" id="IPR023657">
    <property type="entry name" value="Ribosomal_eL40_arc"/>
</dbReference>
<dbReference type="InterPro" id="IPR001975">
    <property type="entry name" value="Ribosomal_eL40_dom"/>
</dbReference>
<dbReference type="InterPro" id="IPR038587">
    <property type="entry name" value="Ribosomal_eL40_sf"/>
</dbReference>
<dbReference type="InterPro" id="IPR011332">
    <property type="entry name" value="Ribosomal_zn-bd"/>
</dbReference>
<dbReference type="NCBIfam" id="NF003161">
    <property type="entry name" value="PRK04136.1"/>
    <property type="match status" value="1"/>
</dbReference>
<dbReference type="PANTHER" id="PTHR39649">
    <property type="entry name" value="50S RIBOSOMAL PROTEIN L40E"/>
    <property type="match status" value="1"/>
</dbReference>
<dbReference type="PANTHER" id="PTHR39649:SF1">
    <property type="entry name" value="LARGE RIBOSOMAL SUBUNIT PROTEIN EL40"/>
    <property type="match status" value="1"/>
</dbReference>
<dbReference type="Pfam" id="PF01020">
    <property type="entry name" value="Ribosomal_L40e"/>
    <property type="match status" value="1"/>
</dbReference>
<dbReference type="SMART" id="SM01377">
    <property type="entry name" value="Ribosomal_L40e"/>
    <property type="match status" value="1"/>
</dbReference>
<dbReference type="SUPFAM" id="SSF57829">
    <property type="entry name" value="Zn-binding ribosomal proteins"/>
    <property type="match status" value="1"/>
</dbReference>
<gene>
    <name evidence="1" type="primary">rpl40e</name>
    <name type="ordered locus">Tneu_1641</name>
</gene>
<reference key="1">
    <citation type="submission" date="2008-03" db="EMBL/GenBank/DDBJ databases">
        <title>Complete sequence of Thermoproteus neutrophilus V24Sta.</title>
        <authorList>
            <consortium name="US DOE Joint Genome Institute"/>
            <person name="Copeland A."/>
            <person name="Lucas S."/>
            <person name="Lapidus A."/>
            <person name="Glavina del Rio T."/>
            <person name="Dalin E."/>
            <person name="Tice H."/>
            <person name="Bruce D."/>
            <person name="Goodwin L."/>
            <person name="Pitluck S."/>
            <person name="Sims D."/>
            <person name="Brettin T."/>
            <person name="Detter J.C."/>
            <person name="Han C."/>
            <person name="Kuske C.R."/>
            <person name="Schmutz J."/>
            <person name="Larimer F."/>
            <person name="Land M."/>
            <person name="Hauser L."/>
            <person name="Kyrpides N."/>
            <person name="Mikhailova N."/>
            <person name="Biddle J.F."/>
            <person name="Zhang Z."/>
            <person name="Fitz-Gibbon S.T."/>
            <person name="Lowe T.M."/>
            <person name="Saltikov C."/>
            <person name="House C.H."/>
            <person name="Richardson P."/>
        </authorList>
    </citation>
    <scope>NUCLEOTIDE SEQUENCE [LARGE SCALE GENOMIC DNA]</scope>
    <source>
        <strain>DSM 2338 / JCM 9278 / NBRC 100436 / V24Sta</strain>
    </source>
</reference>
<keyword id="KW-0687">Ribonucleoprotein</keyword>
<keyword id="KW-0689">Ribosomal protein</keyword>
<accession>B1YA13</accession>
<protein>
    <recommendedName>
        <fullName evidence="1">Large ribosomal subunit protein eL40</fullName>
    </recommendedName>
    <alternativeName>
        <fullName evidence="2">50S ribosomal protein L40e</fullName>
    </alternativeName>
</protein>
<evidence type="ECO:0000255" key="1">
    <source>
        <dbReference type="HAMAP-Rule" id="MF_00788"/>
    </source>
</evidence>
<evidence type="ECO:0000305" key="2"/>
<sequence length="53" mass="6329">MPITLDPEKLAIVMKHRFQYKICRECGARNPPDAVKCRRCRSKNLRPKKFKKK</sequence>